<protein>
    <recommendedName>
        <fullName>Vacuolar protein-sorting-associated protein 25</fullName>
    </recommendedName>
    <alternativeName>
        <fullName>ESCRT-II complex subunit VPS25</fullName>
    </alternativeName>
</protein>
<accession>Q9CQ80</accession>
<accession>A2A4J9</accession>
<accession>A2A4K1</accession>
<accession>Q3UBT0</accession>
<accession>Q9D167</accession>
<reference key="1">
    <citation type="journal article" date="2005" name="Science">
        <title>The transcriptional landscape of the mammalian genome.</title>
        <authorList>
            <person name="Carninci P."/>
            <person name="Kasukawa T."/>
            <person name="Katayama S."/>
            <person name="Gough J."/>
            <person name="Frith M.C."/>
            <person name="Maeda N."/>
            <person name="Oyama R."/>
            <person name="Ravasi T."/>
            <person name="Lenhard B."/>
            <person name="Wells C."/>
            <person name="Kodzius R."/>
            <person name="Shimokawa K."/>
            <person name="Bajic V.B."/>
            <person name="Brenner S.E."/>
            <person name="Batalov S."/>
            <person name="Forrest A.R."/>
            <person name="Zavolan M."/>
            <person name="Davis M.J."/>
            <person name="Wilming L.G."/>
            <person name="Aidinis V."/>
            <person name="Allen J.E."/>
            <person name="Ambesi-Impiombato A."/>
            <person name="Apweiler R."/>
            <person name="Aturaliya R.N."/>
            <person name="Bailey T.L."/>
            <person name="Bansal M."/>
            <person name="Baxter L."/>
            <person name="Beisel K.W."/>
            <person name="Bersano T."/>
            <person name="Bono H."/>
            <person name="Chalk A.M."/>
            <person name="Chiu K.P."/>
            <person name="Choudhary V."/>
            <person name="Christoffels A."/>
            <person name="Clutterbuck D.R."/>
            <person name="Crowe M.L."/>
            <person name="Dalla E."/>
            <person name="Dalrymple B.P."/>
            <person name="de Bono B."/>
            <person name="Della Gatta G."/>
            <person name="di Bernardo D."/>
            <person name="Down T."/>
            <person name="Engstrom P."/>
            <person name="Fagiolini M."/>
            <person name="Faulkner G."/>
            <person name="Fletcher C.F."/>
            <person name="Fukushima T."/>
            <person name="Furuno M."/>
            <person name="Futaki S."/>
            <person name="Gariboldi M."/>
            <person name="Georgii-Hemming P."/>
            <person name="Gingeras T.R."/>
            <person name="Gojobori T."/>
            <person name="Green R.E."/>
            <person name="Gustincich S."/>
            <person name="Harbers M."/>
            <person name="Hayashi Y."/>
            <person name="Hensch T.K."/>
            <person name="Hirokawa N."/>
            <person name="Hill D."/>
            <person name="Huminiecki L."/>
            <person name="Iacono M."/>
            <person name="Ikeo K."/>
            <person name="Iwama A."/>
            <person name="Ishikawa T."/>
            <person name="Jakt M."/>
            <person name="Kanapin A."/>
            <person name="Katoh M."/>
            <person name="Kawasawa Y."/>
            <person name="Kelso J."/>
            <person name="Kitamura H."/>
            <person name="Kitano H."/>
            <person name="Kollias G."/>
            <person name="Krishnan S.P."/>
            <person name="Kruger A."/>
            <person name="Kummerfeld S.K."/>
            <person name="Kurochkin I.V."/>
            <person name="Lareau L.F."/>
            <person name="Lazarevic D."/>
            <person name="Lipovich L."/>
            <person name="Liu J."/>
            <person name="Liuni S."/>
            <person name="McWilliam S."/>
            <person name="Madan Babu M."/>
            <person name="Madera M."/>
            <person name="Marchionni L."/>
            <person name="Matsuda H."/>
            <person name="Matsuzawa S."/>
            <person name="Miki H."/>
            <person name="Mignone F."/>
            <person name="Miyake S."/>
            <person name="Morris K."/>
            <person name="Mottagui-Tabar S."/>
            <person name="Mulder N."/>
            <person name="Nakano N."/>
            <person name="Nakauchi H."/>
            <person name="Ng P."/>
            <person name="Nilsson R."/>
            <person name="Nishiguchi S."/>
            <person name="Nishikawa S."/>
            <person name="Nori F."/>
            <person name="Ohara O."/>
            <person name="Okazaki Y."/>
            <person name="Orlando V."/>
            <person name="Pang K.C."/>
            <person name="Pavan W.J."/>
            <person name="Pavesi G."/>
            <person name="Pesole G."/>
            <person name="Petrovsky N."/>
            <person name="Piazza S."/>
            <person name="Reed J."/>
            <person name="Reid J.F."/>
            <person name="Ring B.Z."/>
            <person name="Ringwald M."/>
            <person name="Rost B."/>
            <person name="Ruan Y."/>
            <person name="Salzberg S.L."/>
            <person name="Sandelin A."/>
            <person name="Schneider C."/>
            <person name="Schoenbach C."/>
            <person name="Sekiguchi K."/>
            <person name="Semple C.A."/>
            <person name="Seno S."/>
            <person name="Sessa L."/>
            <person name="Sheng Y."/>
            <person name="Shibata Y."/>
            <person name="Shimada H."/>
            <person name="Shimada K."/>
            <person name="Silva D."/>
            <person name="Sinclair B."/>
            <person name="Sperling S."/>
            <person name="Stupka E."/>
            <person name="Sugiura K."/>
            <person name="Sultana R."/>
            <person name="Takenaka Y."/>
            <person name="Taki K."/>
            <person name="Tammoja K."/>
            <person name="Tan S.L."/>
            <person name="Tang S."/>
            <person name="Taylor M.S."/>
            <person name="Tegner J."/>
            <person name="Teichmann S.A."/>
            <person name="Ueda H.R."/>
            <person name="van Nimwegen E."/>
            <person name="Verardo R."/>
            <person name="Wei C.L."/>
            <person name="Yagi K."/>
            <person name="Yamanishi H."/>
            <person name="Zabarovsky E."/>
            <person name="Zhu S."/>
            <person name="Zimmer A."/>
            <person name="Hide W."/>
            <person name="Bult C."/>
            <person name="Grimmond S.M."/>
            <person name="Teasdale R.D."/>
            <person name="Liu E.T."/>
            <person name="Brusic V."/>
            <person name="Quackenbush J."/>
            <person name="Wahlestedt C."/>
            <person name="Mattick J.S."/>
            <person name="Hume D.A."/>
            <person name="Kai C."/>
            <person name="Sasaki D."/>
            <person name="Tomaru Y."/>
            <person name="Fukuda S."/>
            <person name="Kanamori-Katayama M."/>
            <person name="Suzuki M."/>
            <person name="Aoki J."/>
            <person name="Arakawa T."/>
            <person name="Iida J."/>
            <person name="Imamura K."/>
            <person name="Itoh M."/>
            <person name="Kato T."/>
            <person name="Kawaji H."/>
            <person name="Kawagashira N."/>
            <person name="Kawashima T."/>
            <person name="Kojima M."/>
            <person name="Kondo S."/>
            <person name="Konno H."/>
            <person name="Nakano K."/>
            <person name="Ninomiya N."/>
            <person name="Nishio T."/>
            <person name="Okada M."/>
            <person name="Plessy C."/>
            <person name="Shibata K."/>
            <person name="Shiraki T."/>
            <person name="Suzuki S."/>
            <person name="Tagami M."/>
            <person name="Waki K."/>
            <person name="Watahiki A."/>
            <person name="Okamura-Oho Y."/>
            <person name="Suzuki H."/>
            <person name="Kawai J."/>
            <person name="Hayashizaki Y."/>
        </authorList>
    </citation>
    <scope>NUCLEOTIDE SEQUENCE [LARGE SCALE MRNA] (ISOFORMS 1 AND 2)</scope>
    <source>
        <strain>C57BL/6J</strain>
        <tissue>Bone marrow</tissue>
        <tissue>Kidney</tissue>
        <tissue>Lung</tissue>
    </source>
</reference>
<reference key="2">
    <citation type="journal article" date="2009" name="PLoS Biol.">
        <title>Lineage-specific biology revealed by a finished genome assembly of the mouse.</title>
        <authorList>
            <person name="Church D.M."/>
            <person name="Goodstadt L."/>
            <person name="Hillier L.W."/>
            <person name="Zody M.C."/>
            <person name="Goldstein S."/>
            <person name="She X."/>
            <person name="Bult C.J."/>
            <person name="Agarwala R."/>
            <person name="Cherry J.L."/>
            <person name="DiCuccio M."/>
            <person name="Hlavina W."/>
            <person name="Kapustin Y."/>
            <person name="Meric P."/>
            <person name="Maglott D."/>
            <person name="Birtle Z."/>
            <person name="Marques A.C."/>
            <person name="Graves T."/>
            <person name="Zhou S."/>
            <person name="Teague B."/>
            <person name="Potamousis K."/>
            <person name="Churas C."/>
            <person name="Place M."/>
            <person name="Herschleb J."/>
            <person name="Runnheim R."/>
            <person name="Forrest D."/>
            <person name="Amos-Landgraf J."/>
            <person name="Schwartz D.C."/>
            <person name="Cheng Z."/>
            <person name="Lindblad-Toh K."/>
            <person name="Eichler E.E."/>
            <person name="Ponting C.P."/>
        </authorList>
    </citation>
    <scope>NUCLEOTIDE SEQUENCE [LARGE SCALE GENOMIC DNA]</scope>
    <source>
        <strain>C57BL/6J</strain>
    </source>
</reference>
<reference key="3">
    <citation type="journal article" date="2004" name="Genome Res.">
        <title>The status, quality, and expansion of the NIH full-length cDNA project: the Mammalian Gene Collection (MGC).</title>
        <authorList>
            <consortium name="The MGC Project Team"/>
        </authorList>
    </citation>
    <scope>NUCLEOTIDE SEQUENCE [LARGE SCALE MRNA] (ISOFORM 1)</scope>
    <source>
        <strain>FVB/N</strain>
        <tissue>Kidney</tissue>
    </source>
</reference>
<reference key="4">
    <citation type="journal article" date="2010" name="Cell">
        <title>A tissue-specific atlas of mouse protein phosphorylation and expression.</title>
        <authorList>
            <person name="Huttlin E.L."/>
            <person name="Jedrychowski M.P."/>
            <person name="Elias J.E."/>
            <person name="Goswami T."/>
            <person name="Rad R."/>
            <person name="Beausoleil S.A."/>
            <person name="Villen J."/>
            <person name="Haas W."/>
            <person name="Sowa M.E."/>
            <person name="Gygi S.P."/>
        </authorList>
    </citation>
    <scope>IDENTIFICATION BY MASS SPECTROMETRY [LARGE SCALE ANALYSIS]</scope>
    <source>
        <tissue>Brain</tissue>
        <tissue>Brown adipose tissue</tissue>
        <tissue>Heart</tissue>
        <tissue>Kidney</tissue>
        <tissue>Liver</tissue>
        <tissue>Lung</tissue>
        <tissue>Pancreas</tissue>
        <tissue>Spleen</tissue>
        <tissue>Testis</tissue>
    </source>
</reference>
<name>VPS25_MOUSE</name>
<gene>
    <name type="primary">Vps25</name>
    <name type="synonym">D11Wsu68e</name>
</gene>
<comment type="function">
    <text evidence="1">Component of the ESCRT-II complex (endosomal sorting complex required for transport II), which is required for multivesicular body (MVB) formation and sorting of endosomal cargo proteins into MVBs. The MVB pathway mediates delivery of transmembrane proteins into the lumen of the lysosome for degradation. The ESCRT-II complex is probably involved in the recruitment of the ESCRT-III complex. The ESCRT-II complex may also play a role in transcription regulation, possibly via its interaction with ELL (By similarity).</text>
</comment>
<comment type="subunit">
    <text evidence="1">Component of a complex at least composed of ELL, SNF8/EAP30, VPS25/EAP20 and VPS36/EAP45 (By similarity). Component of the endosomal sorting complex required for transport II (ESCRT-II), composed of SNF8, VPS36 and 2 copies of VPS25. Interacts with CFTR; the interaction requires misfolded CFTR. Interacts (via C-terminal half) with the ESCRT-III subunit CHMP6 (via N-terminal half) (By similarity).</text>
</comment>
<comment type="subcellular location">
    <subcellularLocation>
        <location evidence="1">Cytoplasm</location>
    </subcellularLocation>
    <subcellularLocation>
        <location evidence="1">Endosome membrane</location>
    </subcellularLocation>
    <subcellularLocation>
        <location evidence="1">Nucleus</location>
    </subcellularLocation>
    <text evidence="1">Distributes diffusely throughout the cytoplasm and nucleoplasm, but exhibits a punctate distribution on coexpression with CHMP6.</text>
</comment>
<comment type="alternative products">
    <event type="alternative splicing"/>
    <isoform>
        <id>Q9CQ80-1</id>
        <name>1</name>
        <sequence type="displayed"/>
    </isoform>
    <isoform>
        <id>Q9CQ80-2</id>
        <name>2</name>
        <sequence type="described" ref="VSP_015341"/>
    </isoform>
</comment>
<comment type="similarity">
    <text evidence="3">Belongs to the VPS25 family.</text>
</comment>
<organism>
    <name type="scientific">Mus musculus</name>
    <name type="common">Mouse</name>
    <dbReference type="NCBI Taxonomy" id="10090"/>
    <lineage>
        <taxon>Eukaryota</taxon>
        <taxon>Metazoa</taxon>
        <taxon>Chordata</taxon>
        <taxon>Craniata</taxon>
        <taxon>Vertebrata</taxon>
        <taxon>Euteleostomi</taxon>
        <taxon>Mammalia</taxon>
        <taxon>Eutheria</taxon>
        <taxon>Euarchontoglires</taxon>
        <taxon>Glires</taxon>
        <taxon>Rodentia</taxon>
        <taxon>Myomorpha</taxon>
        <taxon>Muroidea</taxon>
        <taxon>Muridae</taxon>
        <taxon>Murinae</taxon>
        <taxon>Mus</taxon>
        <taxon>Mus</taxon>
    </lineage>
</organism>
<dbReference type="EMBL" id="AK002500">
    <property type="protein sequence ID" value="BAB22148.1"/>
    <property type="molecule type" value="mRNA"/>
</dbReference>
<dbReference type="EMBL" id="AK003715">
    <property type="protein sequence ID" value="BAB22955.1"/>
    <property type="molecule type" value="mRNA"/>
</dbReference>
<dbReference type="EMBL" id="AK003877">
    <property type="protein sequence ID" value="BAB23054.1"/>
    <property type="molecule type" value="mRNA"/>
</dbReference>
<dbReference type="EMBL" id="AK145811">
    <property type="protein sequence ID" value="BAE26665.1"/>
    <property type="molecule type" value="mRNA"/>
</dbReference>
<dbReference type="EMBL" id="AK150822">
    <property type="protein sequence ID" value="BAE29884.1"/>
    <property type="molecule type" value="mRNA"/>
</dbReference>
<dbReference type="EMBL" id="AK166008">
    <property type="protein sequence ID" value="BAE38516.1"/>
    <property type="molecule type" value="mRNA"/>
</dbReference>
<dbReference type="EMBL" id="AL590969">
    <property type="status" value="NOT_ANNOTATED_CDS"/>
    <property type="molecule type" value="Genomic_DNA"/>
</dbReference>
<dbReference type="EMBL" id="BC029181">
    <property type="protein sequence ID" value="AAH29181.1"/>
    <property type="molecule type" value="mRNA"/>
</dbReference>
<dbReference type="CCDS" id="CCDS25458.1">
    <molecule id="Q9CQ80-1"/>
</dbReference>
<dbReference type="CCDS" id="CCDS70312.1">
    <molecule id="Q9CQ80-2"/>
</dbReference>
<dbReference type="RefSeq" id="NP_001271340.1">
    <property type="nucleotide sequence ID" value="NM_001284411.1"/>
</dbReference>
<dbReference type="RefSeq" id="NP_001271343.1">
    <molecule id="Q9CQ80-2"/>
    <property type="nucleotide sequence ID" value="NM_001284414.1"/>
</dbReference>
<dbReference type="RefSeq" id="NP_081052.2">
    <molecule id="Q9CQ80-1"/>
    <property type="nucleotide sequence ID" value="NM_026776.4"/>
</dbReference>
<dbReference type="SMR" id="Q9CQ80"/>
<dbReference type="BioGRID" id="205754">
    <property type="interactions" value="10"/>
</dbReference>
<dbReference type="FunCoup" id="Q9CQ80">
    <property type="interactions" value="3544"/>
</dbReference>
<dbReference type="IntAct" id="Q9CQ80">
    <property type="interactions" value="3"/>
</dbReference>
<dbReference type="STRING" id="10090.ENSMUSP00000102901"/>
<dbReference type="iPTMnet" id="Q9CQ80"/>
<dbReference type="PhosphoSitePlus" id="Q9CQ80"/>
<dbReference type="jPOST" id="Q9CQ80"/>
<dbReference type="PaxDb" id="10090-ENSMUSP00000042088"/>
<dbReference type="PeptideAtlas" id="Q9CQ80"/>
<dbReference type="ProteomicsDB" id="299956">
    <molecule id="Q9CQ80-1"/>
</dbReference>
<dbReference type="ProteomicsDB" id="299957">
    <molecule id="Q9CQ80-2"/>
</dbReference>
<dbReference type="Pumba" id="Q9CQ80"/>
<dbReference type="Antibodypedia" id="29407">
    <property type="antibodies" value="224 antibodies from 30 providers"/>
</dbReference>
<dbReference type="DNASU" id="28084"/>
<dbReference type="Ensembl" id="ENSMUST00000007533.15">
    <molecule id="Q9CQ80-2"/>
    <property type="protein sequence ID" value="ENSMUSP00000007533.9"/>
    <property type="gene ID" value="ENSMUSG00000078656.12"/>
</dbReference>
<dbReference type="Ensembl" id="ENSMUST00000042477.13">
    <molecule id="Q9CQ80-1"/>
    <property type="protein sequence ID" value="ENSMUSP00000042088.7"/>
    <property type="gene ID" value="ENSMUSG00000078656.12"/>
</dbReference>
<dbReference type="GeneID" id="28084"/>
<dbReference type="KEGG" id="mmu:28084"/>
<dbReference type="UCSC" id="uc007loa.2">
    <molecule id="Q9CQ80-1"/>
    <property type="organism name" value="mouse"/>
</dbReference>
<dbReference type="UCSC" id="uc007lob.2">
    <molecule id="Q9CQ80-2"/>
    <property type="organism name" value="mouse"/>
</dbReference>
<dbReference type="AGR" id="MGI:106354"/>
<dbReference type="CTD" id="84313"/>
<dbReference type="MGI" id="MGI:106354">
    <property type="gene designation" value="Vps25"/>
</dbReference>
<dbReference type="VEuPathDB" id="HostDB:ENSMUSG00000078656"/>
<dbReference type="eggNOG" id="KOG4068">
    <property type="taxonomic scope" value="Eukaryota"/>
</dbReference>
<dbReference type="GeneTree" id="ENSGT00390000014892"/>
<dbReference type="HOGENOM" id="CLU_087657_1_0_1"/>
<dbReference type="InParanoid" id="Q9CQ80"/>
<dbReference type="OMA" id="TRCLIMW"/>
<dbReference type="OrthoDB" id="245150at2759"/>
<dbReference type="PhylomeDB" id="Q9CQ80"/>
<dbReference type="TreeFam" id="TF317731"/>
<dbReference type="Reactome" id="R-MMU-917729">
    <property type="pathway name" value="Endosomal Sorting Complex Required For Transport (ESCRT)"/>
</dbReference>
<dbReference type="BioGRID-ORCS" id="28084">
    <property type="hits" value="35 hits in 78 CRISPR screens"/>
</dbReference>
<dbReference type="ChiTaRS" id="Vps25">
    <property type="organism name" value="mouse"/>
</dbReference>
<dbReference type="PRO" id="PR:Q9CQ80"/>
<dbReference type="Proteomes" id="UP000000589">
    <property type="component" value="Chromosome 11"/>
</dbReference>
<dbReference type="RNAct" id="Q9CQ80">
    <property type="molecule type" value="protein"/>
</dbReference>
<dbReference type="Bgee" id="ENSMUSG00000078656">
    <property type="expression patterns" value="Expressed in yolk sac and 192 other cell types or tissues"/>
</dbReference>
<dbReference type="ExpressionAtlas" id="Q9CQ80">
    <property type="expression patterns" value="baseline and differential"/>
</dbReference>
<dbReference type="GO" id="GO:0005829">
    <property type="term" value="C:cytosol"/>
    <property type="evidence" value="ECO:0007669"/>
    <property type="project" value="Ensembl"/>
</dbReference>
<dbReference type="GO" id="GO:0000814">
    <property type="term" value="C:ESCRT II complex"/>
    <property type="evidence" value="ECO:0007669"/>
    <property type="project" value="Ensembl"/>
</dbReference>
<dbReference type="GO" id="GO:0005739">
    <property type="term" value="C:mitochondrion"/>
    <property type="evidence" value="ECO:0007005"/>
    <property type="project" value="MGI"/>
</dbReference>
<dbReference type="GO" id="GO:0005634">
    <property type="term" value="C:nucleus"/>
    <property type="evidence" value="ECO:0007669"/>
    <property type="project" value="UniProtKB-SubCell"/>
</dbReference>
<dbReference type="GO" id="GO:0042803">
    <property type="term" value="F:protein homodimerization activity"/>
    <property type="evidence" value="ECO:0007669"/>
    <property type="project" value="Ensembl"/>
</dbReference>
<dbReference type="GO" id="GO:0071985">
    <property type="term" value="P:multivesicular body sorting pathway"/>
    <property type="evidence" value="ECO:0007669"/>
    <property type="project" value="InterPro"/>
</dbReference>
<dbReference type="GO" id="GO:0015031">
    <property type="term" value="P:protein transport"/>
    <property type="evidence" value="ECO:0007669"/>
    <property type="project" value="UniProtKB-KW"/>
</dbReference>
<dbReference type="FunFam" id="1.10.10.10:FF:000141">
    <property type="entry name" value="vacuolar protein-sorting-associated protein 25"/>
    <property type="match status" value="1"/>
</dbReference>
<dbReference type="FunFam" id="1.10.10.570:FF:000001">
    <property type="entry name" value="vacuolar protein-sorting-associated protein 25"/>
    <property type="match status" value="1"/>
</dbReference>
<dbReference type="Gene3D" id="1.10.10.570">
    <property type="entry name" value="Winged helix' DNA-binding domain. Chain C. Domain 1"/>
    <property type="match status" value="1"/>
</dbReference>
<dbReference type="Gene3D" id="1.10.10.10">
    <property type="entry name" value="Winged helix-like DNA-binding domain superfamily/Winged helix DNA-binding domain"/>
    <property type="match status" value="1"/>
</dbReference>
<dbReference type="InterPro" id="IPR008570">
    <property type="entry name" value="ESCRT-II_cplx_Vps25-sub"/>
</dbReference>
<dbReference type="InterPro" id="IPR014041">
    <property type="entry name" value="ESCRT-II_cplx_Vps25-sub_N"/>
</dbReference>
<dbReference type="InterPro" id="IPR036388">
    <property type="entry name" value="WH-like_DNA-bd_sf"/>
</dbReference>
<dbReference type="InterPro" id="IPR036390">
    <property type="entry name" value="WH_DNA-bd_sf"/>
</dbReference>
<dbReference type="PANTHER" id="PTHR13149">
    <property type="entry name" value="VACUOLAR PROTEIN SORTING-ASSOCIATED PROTEIN VPS25"/>
    <property type="match status" value="1"/>
</dbReference>
<dbReference type="PANTHER" id="PTHR13149:SF0">
    <property type="entry name" value="VACUOLAR PROTEIN-SORTING-ASSOCIATED PROTEIN 25"/>
    <property type="match status" value="1"/>
</dbReference>
<dbReference type="Pfam" id="PF05871">
    <property type="entry name" value="ESCRT-II"/>
    <property type="match status" value="1"/>
</dbReference>
<dbReference type="SUPFAM" id="SSF46785">
    <property type="entry name" value="Winged helix' DNA-binding domain"/>
    <property type="match status" value="2"/>
</dbReference>
<feature type="chain" id="PRO_0000215217" description="Vacuolar protein-sorting-associated protein 25">
    <location>
        <begin position="1"/>
        <end position="176"/>
    </location>
</feature>
<feature type="splice variant" id="VSP_015341" description="In isoform 2." evidence="2">
    <original>EFHGLDEATLLRALQALQQEHKAEIITVSDGRGVKFF</original>
    <variation>ASSRFVGVS</variation>
    <location>
        <begin position="140"/>
        <end position="176"/>
    </location>
</feature>
<sequence length="176" mass="20748">MAMSFEWPWQYRFPPFFTLQPNVDTRQKQLAAWCSLVLSFCRLHKQSSMTVMEAQESPLFNNVKLQRKLPVESIQIVLEELRKKGNLEWLDKNKSSFLIMWRRPEEWGKLIYQWVSRSGQNNSVFTLYELTSGEDTEDEEFHGLDEATLLRALQALQQEHKAEIITVSDGRGVKFF</sequence>
<evidence type="ECO:0000250" key="1"/>
<evidence type="ECO:0000303" key="2">
    <source>
    </source>
</evidence>
<evidence type="ECO:0000305" key="3"/>
<proteinExistence type="evidence at protein level"/>
<keyword id="KW-0025">Alternative splicing</keyword>
<keyword id="KW-0963">Cytoplasm</keyword>
<keyword id="KW-0967">Endosome</keyword>
<keyword id="KW-0472">Membrane</keyword>
<keyword id="KW-0539">Nucleus</keyword>
<keyword id="KW-0653">Protein transport</keyword>
<keyword id="KW-1185">Reference proteome</keyword>
<keyword id="KW-0804">Transcription</keyword>
<keyword id="KW-0805">Transcription regulation</keyword>
<keyword id="KW-0813">Transport</keyword>